<keyword id="KW-0025">Alternative splicing</keyword>
<keyword id="KW-0040">ANK repeat</keyword>
<keyword id="KW-0053">Apoptosis</keyword>
<keyword id="KW-0539">Nucleus</keyword>
<keyword id="KW-0656">Proto-oncogene</keyword>
<keyword id="KW-1185">Reference proteome</keyword>
<keyword id="KW-0677">Repeat</keyword>
<keyword id="KW-0728">SH3 domain</keyword>
<sequence>MVTTSSGGGIGYPANNGVTQVSLIHSSDSVRTVSTAPIYRPTSSMASTMAHKSSTAPFISANQRMSKPPVRVVAQPPPPHPQALSQQYHQQNPMMMYSAPNTRPHVIPTMQVQPTMAAQIKRNNPVNAQFQNPSEMIADYGVKPQSVEMVQRVRAVRRQVADEETELRRLRELEHETAQLQNKNYGRERELNVQGSMLKEAQLELRNASMRAQSLNKHLEEMYRRRQTAAAAALVEQRKMQQHQILLARAANQVSTQEVIRPRASVEPFQVNNTQQQQPSPQMMKSEEFSEKRDLNGQTGSYDAIDGSGDHQKIPTEPSYLAPCKENQQKYSELSKMASTDPHSNHSSPSTSSQKAPTLITFSPPSFEQKINSSTMTRDSPFVERPTSFGDSLDESRLRSGKTDLVSLRSDSLKATKRRSWAASEGTSMSEAEMIHRLLDEQRRGRSHFIPQLPTSQEEPSAITSETYAEEVVNSESKQVATSSDSTNNLELPTEQMVLGSDTTTEEDASSCSTRSDDGQNLEMEVAIERRTVKGILRRPNEKMNKGRIEFDPLALLLDAALEGELDLVRSSASKLTDVSQANDEGITALHNAICAGHYEIVRFLIENDADVNAQDSDGWTPLHCAASCNNLPMVRQLVEGGGCVLASTLSDMETPVEKCEEDEDGYDGCLKYLSAAHNSTGSINTGKVYAAYGYEAAFEDELSFDAGDELTVIEKDKVDKNWWTCEKNNGEKGQVPRTYLALYPSLKYRKKLNFVMFDLPLESNNNVE</sequence>
<name>IASPP_CAEEL</name>
<proteinExistence type="evidence at protein level"/>
<dbReference type="EMBL" id="BX284605">
    <property type="protein sequence ID" value="CAB03115.1"/>
    <property type="molecule type" value="Genomic_DNA"/>
</dbReference>
<dbReference type="EMBL" id="BX284605">
    <property type="protein sequence ID" value="CBW44381.1"/>
    <property type="molecule type" value="Genomic_DNA"/>
</dbReference>
<dbReference type="EMBL" id="BX284605">
    <property type="protein sequence ID" value="CBW44382.1"/>
    <property type="molecule type" value="Genomic_DNA"/>
</dbReference>
<dbReference type="EMBL" id="BX284605">
    <property type="protein sequence ID" value="CBW44383.1"/>
    <property type="molecule type" value="Genomic_DNA"/>
</dbReference>
<dbReference type="PIR" id="T22316">
    <property type="entry name" value="T22316"/>
</dbReference>
<dbReference type="RefSeq" id="NP_001256353.1">
    <molecule id="Q9XVN3-1"/>
    <property type="nucleotide sequence ID" value="NM_001269424.2"/>
</dbReference>
<dbReference type="RefSeq" id="NP_001256354.1">
    <molecule id="Q9XVN3-2"/>
    <property type="nucleotide sequence ID" value="NM_001269425.4"/>
</dbReference>
<dbReference type="RefSeq" id="NP_001256355.1">
    <molecule id="Q9XVN3-3"/>
    <property type="nucleotide sequence ID" value="NM_001269426.3"/>
</dbReference>
<dbReference type="RefSeq" id="NP_001256356.1">
    <molecule id="Q9XVN3-4"/>
    <property type="nucleotide sequence ID" value="NM_001269427.3"/>
</dbReference>
<dbReference type="SMR" id="Q9XVN3"/>
<dbReference type="BioGRID" id="44626">
    <property type="interactions" value="14"/>
</dbReference>
<dbReference type="FunCoup" id="Q9XVN3">
    <property type="interactions" value="346"/>
</dbReference>
<dbReference type="IntAct" id="Q9XVN3">
    <property type="interactions" value="10"/>
</dbReference>
<dbReference type="STRING" id="6239.F46F3.4a.1"/>
<dbReference type="iPTMnet" id="Q9XVN3"/>
<dbReference type="PaxDb" id="6239-F46F3.4a"/>
<dbReference type="EnsemblMetazoa" id="F46F3.4a.1">
    <molecule id="Q9XVN3-1"/>
    <property type="protein sequence ID" value="F46F3.4a.1"/>
    <property type="gene ID" value="WBGene00000146"/>
</dbReference>
<dbReference type="EnsemblMetazoa" id="F46F3.4b.1">
    <molecule id="Q9XVN3-2"/>
    <property type="protein sequence ID" value="F46F3.4b.1"/>
    <property type="gene ID" value="WBGene00000146"/>
</dbReference>
<dbReference type="EnsemblMetazoa" id="F46F3.4c.1">
    <molecule id="Q9XVN3-3"/>
    <property type="protein sequence ID" value="F46F3.4c.1"/>
    <property type="gene ID" value="WBGene00000146"/>
</dbReference>
<dbReference type="EnsemblMetazoa" id="F46F3.4d.1">
    <molecule id="Q9XVN3-4"/>
    <property type="protein sequence ID" value="F46F3.4d.1"/>
    <property type="gene ID" value="WBGene00000146"/>
</dbReference>
<dbReference type="GeneID" id="179601"/>
<dbReference type="KEGG" id="cel:CELE_F46F3.4"/>
<dbReference type="UCSC" id="F46F3.4">
    <molecule id="Q9XVN3-1"/>
    <property type="organism name" value="c. elegans"/>
</dbReference>
<dbReference type="AGR" id="WB:WBGene00000146"/>
<dbReference type="CTD" id="179601"/>
<dbReference type="WormBase" id="F46F3.4a">
    <molecule id="Q9XVN3-1"/>
    <property type="protein sequence ID" value="CE19874"/>
    <property type="gene ID" value="WBGene00000146"/>
    <property type="gene designation" value="ape-1"/>
</dbReference>
<dbReference type="WormBase" id="F46F3.4b">
    <molecule id="Q9XVN3-2"/>
    <property type="protein sequence ID" value="CE45256"/>
    <property type="gene ID" value="WBGene00000146"/>
    <property type="gene designation" value="ape-1"/>
</dbReference>
<dbReference type="WormBase" id="F46F3.4c">
    <molecule id="Q9XVN3-3"/>
    <property type="protein sequence ID" value="CE45269"/>
    <property type="gene ID" value="WBGene00000146"/>
    <property type="gene designation" value="ape-1"/>
</dbReference>
<dbReference type="WormBase" id="F46F3.4d">
    <molecule id="Q9XVN3-4"/>
    <property type="protein sequence ID" value="CE45244"/>
    <property type="gene ID" value="WBGene00000146"/>
    <property type="gene designation" value="ape-1"/>
</dbReference>
<dbReference type="eggNOG" id="KOG0515">
    <property type="taxonomic scope" value="Eukaryota"/>
</dbReference>
<dbReference type="GeneTree" id="ENSGT00940000153463"/>
<dbReference type="HOGENOM" id="CLU_391406_0_0_1"/>
<dbReference type="InParanoid" id="Q9XVN3"/>
<dbReference type="OMA" id="YDGCLKY"/>
<dbReference type="OrthoDB" id="10038642at2759"/>
<dbReference type="PRO" id="PR:Q9XVN3"/>
<dbReference type="Proteomes" id="UP000001940">
    <property type="component" value="Chromosome V"/>
</dbReference>
<dbReference type="Bgee" id="WBGene00000146">
    <property type="expression patterns" value="Expressed in pharyngeal muscle cell (C elegans) and 4 other cell types or tissues"/>
</dbReference>
<dbReference type="GO" id="GO:0005737">
    <property type="term" value="C:cytoplasm"/>
    <property type="evidence" value="ECO:0000250"/>
    <property type="project" value="WormBase"/>
</dbReference>
<dbReference type="GO" id="GO:0005634">
    <property type="term" value="C:nucleus"/>
    <property type="evidence" value="ECO:0000318"/>
    <property type="project" value="GO_Central"/>
</dbReference>
<dbReference type="GO" id="GO:0002039">
    <property type="term" value="F:p53 binding"/>
    <property type="evidence" value="ECO:0000353"/>
    <property type="project" value="WormBase"/>
</dbReference>
<dbReference type="GO" id="GO:0006915">
    <property type="term" value="P:apoptotic process"/>
    <property type="evidence" value="ECO:0007669"/>
    <property type="project" value="UniProtKB-KW"/>
</dbReference>
<dbReference type="GO" id="GO:0043066">
    <property type="term" value="P:negative regulation of apoptotic process"/>
    <property type="evidence" value="ECO:0000315"/>
    <property type="project" value="WormBase"/>
</dbReference>
<dbReference type="CDD" id="cd00174">
    <property type="entry name" value="SH3"/>
    <property type="match status" value="1"/>
</dbReference>
<dbReference type="FunFam" id="1.25.40.20:FF:000008">
    <property type="entry name" value="Apoptosis-stimulating of p53 protein 2 isoform 1"/>
    <property type="match status" value="1"/>
</dbReference>
<dbReference type="Gene3D" id="1.25.40.20">
    <property type="entry name" value="Ankyrin repeat-containing domain"/>
    <property type="match status" value="1"/>
</dbReference>
<dbReference type="InterPro" id="IPR002110">
    <property type="entry name" value="Ankyrin_rpt"/>
</dbReference>
<dbReference type="InterPro" id="IPR036770">
    <property type="entry name" value="Ankyrin_rpt-contain_sf"/>
</dbReference>
<dbReference type="InterPro" id="IPR047163">
    <property type="entry name" value="ASPP1/2"/>
</dbReference>
<dbReference type="InterPro" id="IPR036028">
    <property type="entry name" value="SH3-like_dom_sf"/>
</dbReference>
<dbReference type="InterPro" id="IPR001452">
    <property type="entry name" value="SH3_domain"/>
</dbReference>
<dbReference type="PANTHER" id="PTHR24131:SF10">
    <property type="entry name" value="ANKYRIN-REPEAT, SH3-DOMAIN, AND PROLINE-RICH-REGION CONTAINING PROTEIN, ISOFORM B"/>
    <property type="match status" value="1"/>
</dbReference>
<dbReference type="PANTHER" id="PTHR24131">
    <property type="entry name" value="APOPTOSIS-STIMULATING OF P53 PROTEIN"/>
    <property type="match status" value="1"/>
</dbReference>
<dbReference type="Pfam" id="PF12796">
    <property type="entry name" value="Ank_2"/>
    <property type="match status" value="1"/>
</dbReference>
<dbReference type="Pfam" id="PF00018">
    <property type="entry name" value="SH3_1"/>
    <property type="match status" value="1"/>
</dbReference>
<dbReference type="PRINTS" id="PR00452">
    <property type="entry name" value="SH3DOMAIN"/>
</dbReference>
<dbReference type="SMART" id="SM00248">
    <property type="entry name" value="ANK"/>
    <property type="match status" value="2"/>
</dbReference>
<dbReference type="SMART" id="SM00326">
    <property type="entry name" value="SH3"/>
    <property type="match status" value="1"/>
</dbReference>
<dbReference type="SUPFAM" id="SSF48403">
    <property type="entry name" value="Ankyrin repeat"/>
    <property type="match status" value="1"/>
</dbReference>
<dbReference type="SUPFAM" id="SSF50044">
    <property type="entry name" value="SH3-domain"/>
    <property type="match status" value="1"/>
</dbReference>
<dbReference type="PROSITE" id="PS50297">
    <property type="entry name" value="ANK_REP_REGION"/>
    <property type="match status" value="1"/>
</dbReference>
<dbReference type="PROSITE" id="PS50088">
    <property type="entry name" value="ANK_REPEAT"/>
    <property type="match status" value="2"/>
</dbReference>
<dbReference type="PROSITE" id="PS50002">
    <property type="entry name" value="SH3"/>
    <property type="match status" value="1"/>
</dbReference>
<organism>
    <name type="scientific">Caenorhabditis elegans</name>
    <dbReference type="NCBI Taxonomy" id="6239"/>
    <lineage>
        <taxon>Eukaryota</taxon>
        <taxon>Metazoa</taxon>
        <taxon>Ecdysozoa</taxon>
        <taxon>Nematoda</taxon>
        <taxon>Chromadorea</taxon>
        <taxon>Rhabditida</taxon>
        <taxon>Rhabditina</taxon>
        <taxon>Rhabditomorpha</taxon>
        <taxon>Rhabditoidea</taxon>
        <taxon>Rhabditidae</taxon>
        <taxon>Peloderinae</taxon>
        <taxon>Caenorhabditis</taxon>
    </lineage>
</organism>
<evidence type="ECO:0000255" key="1"/>
<evidence type="ECO:0000255" key="2">
    <source>
        <dbReference type="PROSITE-ProRule" id="PRU00192"/>
    </source>
</evidence>
<evidence type="ECO:0000256" key="3">
    <source>
        <dbReference type="SAM" id="MobiDB-lite"/>
    </source>
</evidence>
<evidence type="ECO:0000269" key="4">
    <source>
    </source>
</evidence>
<evidence type="ECO:0000303" key="5">
    <source>
    </source>
</evidence>
<evidence type="ECO:0000305" key="6"/>
<evidence type="ECO:0000305" key="7">
    <source>
    </source>
</evidence>
<evidence type="ECO:0000312" key="8">
    <source>
        <dbReference type="WormBase" id="F46F3.4a"/>
    </source>
</evidence>
<evidence type="ECO:0000312" key="9">
    <source>
        <dbReference type="WormBase" id="F46F3.4b"/>
    </source>
</evidence>
<evidence type="ECO:0000312" key="10">
    <source>
        <dbReference type="WormBase" id="F46F3.4c"/>
    </source>
</evidence>
<evidence type="ECO:0000312" key="11">
    <source>
        <dbReference type="WormBase" id="F46F3.4d"/>
    </source>
</evidence>
<protein>
    <recommendedName>
        <fullName evidence="5 8">Apoptotic enhancer 1 protein</fullName>
    </recommendedName>
    <alternativeName>
        <fullName evidence="5">Ce-iASPP</fullName>
    </alternativeName>
    <alternativeName>
        <fullName>Inhibitor member of the ASPP family</fullName>
        <shortName>Protein iASPP</shortName>
    </alternativeName>
</protein>
<reference key="1">
    <citation type="journal article" date="1998" name="Science">
        <title>Genome sequence of the nematode C. elegans: a platform for investigating biology.</title>
        <authorList>
            <consortium name="The C. elegans sequencing consortium"/>
        </authorList>
    </citation>
    <scope>NUCLEOTIDE SEQUENCE [LARGE SCALE GENOMIC DNA]</scope>
    <source>
        <strain>Bristol N2</strain>
    </source>
</reference>
<reference key="2">
    <citation type="journal article" date="2003" name="Nat. Genet.">
        <title>iASPP oncoprotein is a key inhibitor of p53 conserved from worm to human.</title>
        <authorList>
            <person name="Bergamaschi D."/>
            <person name="Samuels Y."/>
            <person name="O'Neil N.J."/>
            <person name="Trigiante G."/>
            <person name="Crook T."/>
            <person name="Hsieh J.-K."/>
            <person name="O'Connor D.J."/>
            <person name="Zhong S."/>
            <person name="Campargue I."/>
            <person name="Tomlinson M.L."/>
            <person name="Kuwabara P.E."/>
            <person name="Lu X."/>
        </authorList>
    </citation>
    <scope>FUNCTION</scope>
    <scope>INTERACTION WITH P53</scope>
    <scope>SUBCELLULAR LOCATION</scope>
    <scope>DISRUPTION PHENOTYPE</scope>
</reference>
<accession>Q9XVN3</accession>
<accession>E0AHC9</accession>
<accession>E0AHD0</accession>
<accession>E0AHD1</accession>
<gene>
    <name evidence="8" type="primary">ape-1</name>
    <name evidence="8" type="ORF">F46F3.4</name>
</gene>
<comment type="function">
    <text evidence="4">Negetively regulates apoptosis via its interaction with cep-1.</text>
</comment>
<comment type="subunit">
    <text evidence="4">Interacts with cep-1/p53; the interaction inhibits pro-apoptotic activity of cep-1.</text>
</comment>
<comment type="subcellular location">
    <subcellularLocation>
        <location evidence="7">Nucleus</location>
    </subcellularLocation>
</comment>
<comment type="alternative products">
    <event type="alternative splicing"/>
    <isoform>
        <id>Q9XVN3-1</id>
        <name evidence="8">a</name>
        <sequence type="displayed"/>
    </isoform>
    <isoform>
        <id>Q9XVN3-2</id>
        <name evidence="9">b</name>
        <sequence type="described" ref="VSP_060342"/>
    </isoform>
    <isoform>
        <id>Q9XVN3-3</id>
        <name evidence="10">c</name>
        <sequence type="described" ref="VSP_060341"/>
    </isoform>
    <isoform>
        <id>Q9XVN3-4</id>
        <name evidence="11">d</name>
        <sequence type="described" ref="VSP_060340"/>
    </isoform>
</comment>
<comment type="disruption phenotype">
    <text evidence="4">RNAi-mediated knockdown results in an increase in number of apoptotic germ cells (PubMed:12524540). Double RNAi-mediated knockdown together with cep-1 abrogates this increased number of apoptotic germ cells (PubMed:12524540).</text>
</comment>
<comment type="similarity">
    <text evidence="6">Belongs to the iASPP family.</text>
</comment>
<feature type="chain" id="PRO_0000066968" description="Apoptotic enhancer 1 protein">
    <location>
        <begin position="1"/>
        <end position="769"/>
    </location>
</feature>
<feature type="repeat" description="ANK 1" evidence="1">
    <location>
        <begin position="585"/>
        <end position="617"/>
    </location>
</feature>
<feature type="repeat" description="ANK 2" evidence="1">
    <location>
        <begin position="618"/>
        <end position="652"/>
    </location>
</feature>
<feature type="domain" description="SH3" evidence="2">
    <location>
        <begin position="684"/>
        <end position="746"/>
    </location>
</feature>
<feature type="region of interest" description="Disordered" evidence="3">
    <location>
        <begin position="69"/>
        <end position="88"/>
    </location>
</feature>
<feature type="region of interest" description="Disordered" evidence="3">
    <location>
        <begin position="265"/>
        <end position="396"/>
    </location>
</feature>
<feature type="region of interest" description="Disordered" evidence="3">
    <location>
        <begin position="451"/>
        <end position="518"/>
    </location>
</feature>
<feature type="compositionally biased region" description="Low complexity" evidence="3">
    <location>
        <begin position="275"/>
        <end position="284"/>
    </location>
</feature>
<feature type="compositionally biased region" description="Basic and acidic residues" evidence="3">
    <location>
        <begin position="285"/>
        <end position="295"/>
    </location>
</feature>
<feature type="compositionally biased region" description="Low complexity" evidence="3">
    <location>
        <begin position="339"/>
        <end position="353"/>
    </location>
</feature>
<feature type="compositionally biased region" description="Polar residues" evidence="3">
    <location>
        <begin position="354"/>
        <end position="378"/>
    </location>
</feature>
<feature type="compositionally biased region" description="Polar residues" evidence="3">
    <location>
        <begin position="453"/>
        <end position="467"/>
    </location>
</feature>
<feature type="compositionally biased region" description="Polar residues" evidence="3">
    <location>
        <begin position="474"/>
        <end position="491"/>
    </location>
</feature>
<feature type="splice variant" id="VSP_060340" description="In isoform d." evidence="6">
    <location>
        <begin position="1"/>
        <end position="428"/>
    </location>
</feature>
<feature type="splice variant" id="VSP_060341" description="In isoform c." evidence="6">
    <location>
        <begin position="1"/>
        <end position="336"/>
    </location>
</feature>
<feature type="splice variant" id="VSP_060342" description="In isoform b." evidence="6">
    <location>
        <begin position="1"/>
        <end position="64"/>
    </location>
</feature>